<name>RS3_CLOAB</name>
<feature type="chain" id="PRO_0000130103" description="Small ribosomal subunit protein uS3">
    <location>
        <begin position="1"/>
        <end position="222"/>
    </location>
</feature>
<feature type="domain" description="KH type-2" evidence="1">
    <location>
        <begin position="39"/>
        <end position="108"/>
    </location>
</feature>
<dbReference type="EMBL" id="AE001437">
    <property type="protein sequence ID" value="AAK81066.1"/>
    <property type="molecule type" value="Genomic_DNA"/>
</dbReference>
<dbReference type="PIR" id="G97284">
    <property type="entry name" value="G97284"/>
</dbReference>
<dbReference type="RefSeq" id="NP_349726.1">
    <property type="nucleotide sequence ID" value="NC_003030.1"/>
</dbReference>
<dbReference type="RefSeq" id="WP_010966406.1">
    <property type="nucleotide sequence ID" value="NC_003030.1"/>
</dbReference>
<dbReference type="SMR" id="Q97EI4"/>
<dbReference type="STRING" id="272562.CA_C3127"/>
<dbReference type="GeneID" id="44999614"/>
<dbReference type="KEGG" id="cac:CA_C3127"/>
<dbReference type="PATRIC" id="fig|272562.8.peg.3310"/>
<dbReference type="eggNOG" id="COG0092">
    <property type="taxonomic scope" value="Bacteria"/>
</dbReference>
<dbReference type="HOGENOM" id="CLU_058591_0_2_9"/>
<dbReference type="OrthoDB" id="9806396at2"/>
<dbReference type="Proteomes" id="UP000000814">
    <property type="component" value="Chromosome"/>
</dbReference>
<dbReference type="GO" id="GO:0022627">
    <property type="term" value="C:cytosolic small ribosomal subunit"/>
    <property type="evidence" value="ECO:0007669"/>
    <property type="project" value="TreeGrafter"/>
</dbReference>
<dbReference type="GO" id="GO:0003729">
    <property type="term" value="F:mRNA binding"/>
    <property type="evidence" value="ECO:0007669"/>
    <property type="project" value="UniProtKB-UniRule"/>
</dbReference>
<dbReference type="GO" id="GO:0019843">
    <property type="term" value="F:rRNA binding"/>
    <property type="evidence" value="ECO:0007669"/>
    <property type="project" value="UniProtKB-UniRule"/>
</dbReference>
<dbReference type="GO" id="GO:0003735">
    <property type="term" value="F:structural constituent of ribosome"/>
    <property type="evidence" value="ECO:0007669"/>
    <property type="project" value="InterPro"/>
</dbReference>
<dbReference type="GO" id="GO:0006412">
    <property type="term" value="P:translation"/>
    <property type="evidence" value="ECO:0007669"/>
    <property type="project" value="UniProtKB-UniRule"/>
</dbReference>
<dbReference type="CDD" id="cd02412">
    <property type="entry name" value="KH-II_30S_S3"/>
    <property type="match status" value="1"/>
</dbReference>
<dbReference type="FunFam" id="3.30.300.20:FF:000001">
    <property type="entry name" value="30S ribosomal protein S3"/>
    <property type="match status" value="1"/>
</dbReference>
<dbReference type="Gene3D" id="3.30.300.20">
    <property type="match status" value="1"/>
</dbReference>
<dbReference type="Gene3D" id="3.30.1140.32">
    <property type="entry name" value="Ribosomal protein S3, C-terminal domain"/>
    <property type="match status" value="1"/>
</dbReference>
<dbReference type="HAMAP" id="MF_01309_B">
    <property type="entry name" value="Ribosomal_uS3_B"/>
    <property type="match status" value="1"/>
</dbReference>
<dbReference type="InterPro" id="IPR004087">
    <property type="entry name" value="KH_dom"/>
</dbReference>
<dbReference type="InterPro" id="IPR015946">
    <property type="entry name" value="KH_dom-like_a/b"/>
</dbReference>
<dbReference type="InterPro" id="IPR004044">
    <property type="entry name" value="KH_dom_type_2"/>
</dbReference>
<dbReference type="InterPro" id="IPR009019">
    <property type="entry name" value="KH_sf_prok-type"/>
</dbReference>
<dbReference type="InterPro" id="IPR036419">
    <property type="entry name" value="Ribosomal_S3_C_sf"/>
</dbReference>
<dbReference type="InterPro" id="IPR005704">
    <property type="entry name" value="Ribosomal_uS3_bac-typ"/>
</dbReference>
<dbReference type="InterPro" id="IPR001351">
    <property type="entry name" value="Ribosomal_uS3_C"/>
</dbReference>
<dbReference type="InterPro" id="IPR018280">
    <property type="entry name" value="Ribosomal_uS3_CS"/>
</dbReference>
<dbReference type="NCBIfam" id="TIGR01009">
    <property type="entry name" value="rpsC_bact"/>
    <property type="match status" value="1"/>
</dbReference>
<dbReference type="PANTHER" id="PTHR11760">
    <property type="entry name" value="30S/40S RIBOSOMAL PROTEIN S3"/>
    <property type="match status" value="1"/>
</dbReference>
<dbReference type="PANTHER" id="PTHR11760:SF19">
    <property type="entry name" value="SMALL RIBOSOMAL SUBUNIT PROTEIN US3C"/>
    <property type="match status" value="1"/>
</dbReference>
<dbReference type="Pfam" id="PF07650">
    <property type="entry name" value="KH_2"/>
    <property type="match status" value="1"/>
</dbReference>
<dbReference type="Pfam" id="PF00189">
    <property type="entry name" value="Ribosomal_S3_C"/>
    <property type="match status" value="1"/>
</dbReference>
<dbReference type="SMART" id="SM00322">
    <property type="entry name" value="KH"/>
    <property type="match status" value="1"/>
</dbReference>
<dbReference type="SUPFAM" id="SSF54814">
    <property type="entry name" value="Prokaryotic type KH domain (KH-domain type II)"/>
    <property type="match status" value="1"/>
</dbReference>
<dbReference type="SUPFAM" id="SSF54821">
    <property type="entry name" value="Ribosomal protein S3 C-terminal domain"/>
    <property type="match status" value="1"/>
</dbReference>
<dbReference type="PROSITE" id="PS50823">
    <property type="entry name" value="KH_TYPE_2"/>
    <property type="match status" value="1"/>
</dbReference>
<dbReference type="PROSITE" id="PS00548">
    <property type="entry name" value="RIBOSOMAL_S3"/>
    <property type="match status" value="1"/>
</dbReference>
<organism>
    <name type="scientific">Clostridium acetobutylicum (strain ATCC 824 / DSM 792 / JCM 1419 / IAM 19013 / LMG 5710 / NBRC 13948 / NRRL B-527 / VKM B-1787 / 2291 / W)</name>
    <dbReference type="NCBI Taxonomy" id="272562"/>
    <lineage>
        <taxon>Bacteria</taxon>
        <taxon>Bacillati</taxon>
        <taxon>Bacillota</taxon>
        <taxon>Clostridia</taxon>
        <taxon>Eubacteriales</taxon>
        <taxon>Clostridiaceae</taxon>
        <taxon>Clostridium</taxon>
    </lineage>
</organism>
<protein>
    <recommendedName>
        <fullName evidence="1">Small ribosomal subunit protein uS3</fullName>
    </recommendedName>
    <alternativeName>
        <fullName evidence="2">30S ribosomal protein S3</fullName>
    </alternativeName>
</protein>
<gene>
    <name evidence="1" type="primary">rpsC</name>
    <name type="ordered locus">CA_C3127</name>
</gene>
<accession>Q97EI4</accession>
<comment type="function">
    <text evidence="1">Binds the lower part of the 30S subunit head. Binds mRNA in the 70S ribosome, positioning it for translation.</text>
</comment>
<comment type="subunit">
    <text evidence="1">Part of the 30S ribosomal subunit. Forms a tight complex with proteins S10 and S14.</text>
</comment>
<comment type="similarity">
    <text evidence="1">Belongs to the universal ribosomal protein uS3 family.</text>
</comment>
<keyword id="KW-1185">Reference proteome</keyword>
<keyword id="KW-0687">Ribonucleoprotein</keyword>
<keyword id="KW-0689">Ribosomal protein</keyword>
<keyword id="KW-0694">RNA-binding</keyword>
<keyword id="KW-0699">rRNA-binding</keyword>
<sequence>MGQKVNPHGLRVGVIKEWNAKWYANSKNFSSYLVQDNKIRKFVKNKLSSAGVSRIEIERAAKRVKLNIHTAKPGMVIGKGGQGIEALKKDLVNFVDKENVLINIVEVKNSDANAQLMAENIAQQLERRISFRRAMKQTIQRAMRTGAKGVKTACAGRLAGAEIARTEQYHEGTIPLQTLRADIDYGFAEADTTYGKIGVKVWVYNGEILPTKKIEKKEEANA</sequence>
<evidence type="ECO:0000255" key="1">
    <source>
        <dbReference type="HAMAP-Rule" id="MF_01309"/>
    </source>
</evidence>
<evidence type="ECO:0000305" key="2"/>
<reference key="1">
    <citation type="journal article" date="2001" name="J. Bacteriol.">
        <title>Genome sequence and comparative analysis of the solvent-producing bacterium Clostridium acetobutylicum.</title>
        <authorList>
            <person name="Noelling J."/>
            <person name="Breton G."/>
            <person name="Omelchenko M.V."/>
            <person name="Makarova K.S."/>
            <person name="Zeng Q."/>
            <person name="Gibson R."/>
            <person name="Lee H.M."/>
            <person name="Dubois J."/>
            <person name="Qiu D."/>
            <person name="Hitti J."/>
            <person name="Wolf Y.I."/>
            <person name="Tatusov R.L."/>
            <person name="Sabathe F."/>
            <person name="Doucette-Stamm L.A."/>
            <person name="Soucaille P."/>
            <person name="Daly M.J."/>
            <person name="Bennett G.N."/>
            <person name="Koonin E.V."/>
            <person name="Smith D.R."/>
        </authorList>
    </citation>
    <scope>NUCLEOTIDE SEQUENCE [LARGE SCALE GENOMIC DNA]</scope>
    <source>
        <strain>ATCC 824 / DSM 792 / JCM 1419 / IAM 19013 / LMG 5710 / NBRC 13948 / NRRL B-527 / VKM B-1787 / 2291 / W</strain>
    </source>
</reference>
<proteinExistence type="inferred from homology"/>